<organism>
    <name type="scientific">Escherichia coli O7:K1 (strain IAI39 / ExPEC)</name>
    <dbReference type="NCBI Taxonomy" id="585057"/>
    <lineage>
        <taxon>Bacteria</taxon>
        <taxon>Pseudomonadati</taxon>
        <taxon>Pseudomonadota</taxon>
        <taxon>Gammaproteobacteria</taxon>
        <taxon>Enterobacterales</taxon>
        <taxon>Enterobacteriaceae</taxon>
        <taxon>Escherichia</taxon>
    </lineage>
</organism>
<dbReference type="EMBL" id="CU928164">
    <property type="protein sequence ID" value="CAR19892.1"/>
    <property type="molecule type" value="Genomic_DNA"/>
</dbReference>
<dbReference type="RefSeq" id="WP_000460682.1">
    <property type="nucleotide sequence ID" value="NC_011750.1"/>
</dbReference>
<dbReference type="RefSeq" id="YP_002409677.1">
    <property type="nucleotide sequence ID" value="NC_011750.1"/>
</dbReference>
<dbReference type="SMR" id="B7NLK3"/>
<dbReference type="STRING" id="585057.ECIAI39_3778"/>
<dbReference type="KEGG" id="ect:ECIAI39_3778"/>
<dbReference type="PATRIC" id="fig|585057.6.peg.3915"/>
<dbReference type="HOGENOM" id="CLU_133242_0_0_6"/>
<dbReference type="Proteomes" id="UP000000749">
    <property type="component" value="Chromosome"/>
</dbReference>
<dbReference type="HAMAP" id="MF_00598">
    <property type="entry name" value="Smg"/>
    <property type="match status" value="1"/>
</dbReference>
<dbReference type="InterPro" id="IPR007456">
    <property type="entry name" value="Smg"/>
</dbReference>
<dbReference type="NCBIfam" id="NF002897">
    <property type="entry name" value="PRK03430.1"/>
    <property type="match status" value="1"/>
</dbReference>
<dbReference type="PANTHER" id="PTHR38692">
    <property type="entry name" value="PROTEIN SMG"/>
    <property type="match status" value="1"/>
</dbReference>
<dbReference type="PANTHER" id="PTHR38692:SF1">
    <property type="entry name" value="PROTEIN SMG"/>
    <property type="match status" value="1"/>
</dbReference>
<dbReference type="Pfam" id="PF04361">
    <property type="entry name" value="DUF494"/>
    <property type="match status" value="1"/>
</dbReference>
<comment type="similarity">
    <text evidence="1">Belongs to the Smg family.</text>
</comment>
<evidence type="ECO:0000255" key="1">
    <source>
        <dbReference type="HAMAP-Rule" id="MF_00598"/>
    </source>
</evidence>
<proteinExistence type="inferred from homology"/>
<name>SMG_ECO7I</name>
<gene>
    <name evidence="1" type="primary">smg</name>
    <name type="ordered locus">ECIAI39_3778</name>
</gene>
<accession>B7NLK3</accession>
<reference key="1">
    <citation type="journal article" date="2009" name="PLoS Genet.">
        <title>Organised genome dynamics in the Escherichia coli species results in highly diverse adaptive paths.</title>
        <authorList>
            <person name="Touchon M."/>
            <person name="Hoede C."/>
            <person name="Tenaillon O."/>
            <person name="Barbe V."/>
            <person name="Baeriswyl S."/>
            <person name="Bidet P."/>
            <person name="Bingen E."/>
            <person name="Bonacorsi S."/>
            <person name="Bouchier C."/>
            <person name="Bouvet O."/>
            <person name="Calteau A."/>
            <person name="Chiapello H."/>
            <person name="Clermont O."/>
            <person name="Cruveiller S."/>
            <person name="Danchin A."/>
            <person name="Diard M."/>
            <person name="Dossat C."/>
            <person name="Karoui M.E."/>
            <person name="Frapy E."/>
            <person name="Garry L."/>
            <person name="Ghigo J.M."/>
            <person name="Gilles A.M."/>
            <person name="Johnson J."/>
            <person name="Le Bouguenec C."/>
            <person name="Lescat M."/>
            <person name="Mangenot S."/>
            <person name="Martinez-Jehanne V."/>
            <person name="Matic I."/>
            <person name="Nassif X."/>
            <person name="Oztas S."/>
            <person name="Petit M.A."/>
            <person name="Pichon C."/>
            <person name="Rouy Z."/>
            <person name="Ruf C.S."/>
            <person name="Schneider D."/>
            <person name="Tourret J."/>
            <person name="Vacherie B."/>
            <person name="Vallenet D."/>
            <person name="Medigue C."/>
            <person name="Rocha E.P.C."/>
            <person name="Denamur E."/>
        </authorList>
    </citation>
    <scope>NUCLEOTIDE SEQUENCE [LARGE SCALE GENOMIC DNA]</scope>
    <source>
        <strain>IAI39 / ExPEC</strain>
    </source>
</reference>
<sequence length="157" mass="18482">MFDVLMYLFETYIHTEAELRVDQDKLEQDLTNAGFDREDIYNALLWLEKLADYQEGLAEPMQLASDPLSMRIYTPEECERLDASCRGFLLFLEQIQVLNLETREMVIERVLALDTAEFDLEDLKWVILMVLFNIPGCENAYQQMEELLFEVNEGMLH</sequence>
<protein>
    <recommendedName>
        <fullName evidence="1">Protein Smg</fullName>
    </recommendedName>
</protein>
<feature type="chain" id="PRO_1000129886" description="Protein Smg">
    <location>
        <begin position="1"/>
        <end position="157"/>
    </location>
</feature>